<proteinExistence type="inferred from homology"/>
<dbReference type="EMBL" id="BX897700">
    <property type="protein sequence ID" value="CAF26751.1"/>
    <property type="molecule type" value="Genomic_DNA"/>
</dbReference>
<dbReference type="RefSeq" id="WP_011179914.1">
    <property type="nucleotide sequence ID" value="NC_005955.1"/>
</dbReference>
<dbReference type="SMR" id="Q6FYF9"/>
<dbReference type="KEGG" id="bqu:BQ12920"/>
<dbReference type="eggNOG" id="COG0228">
    <property type="taxonomic scope" value="Bacteria"/>
</dbReference>
<dbReference type="HOGENOM" id="CLU_100590_3_1_5"/>
<dbReference type="OrthoDB" id="9807878at2"/>
<dbReference type="Proteomes" id="UP000000597">
    <property type="component" value="Chromosome"/>
</dbReference>
<dbReference type="GO" id="GO:0005737">
    <property type="term" value="C:cytoplasm"/>
    <property type="evidence" value="ECO:0007669"/>
    <property type="project" value="UniProtKB-ARBA"/>
</dbReference>
<dbReference type="GO" id="GO:0015935">
    <property type="term" value="C:small ribosomal subunit"/>
    <property type="evidence" value="ECO:0007669"/>
    <property type="project" value="TreeGrafter"/>
</dbReference>
<dbReference type="GO" id="GO:0003735">
    <property type="term" value="F:structural constituent of ribosome"/>
    <property type="evidence" value="ECO:0007669"/>
    <property type="project" value="InterPro"/>
</dbReference>
<dbReference type="GO" id="GO:0006412">
    <property type="term" value="P:translation"/>
    <property type="evidence" value="ECO:0007669"/>
    <property type="project" value="UniProtKB-UniRule"/>
</dbReference>
<dbReference type="Gene3D" id="3.30.1320.10">
    <property type="match status" value="1"/>
</dbReference>
<dbReference type="HAMAP" id="MF_00385">
    <property type="entry name" value="Ribosomal_bS16"/>
    <property type="match status" value="1"/>
</dbReference>
<dbReference type="InterPro" id="IPR000307">
    <property type="entry name" value="Ribosomal_bS16"/>
</dbReference>
<dbReference type="InterPro" id="IPR023803">
    <property type="entry name" value="Ribosomal_bS16_dom_sf"/>
</dbReference>
<dbReference type="NCBIfam" id="TIGR00002">
    <property type="entry name" value="S16"/>
    <property type="match status" value="1"/>
</dbReference>
<dbReference type="PANTHER" id="PTHR12919">
    <property type="entry name" value="30S RIBOSOMAL PROTEIN S16"/>
    <property type="match status" value="1"/>
</dbReference>
<dbReference type="PANTHER" id="PTHR12919:SF20">
    <property type="entry name" value="SMALL RIBOSOMAL SUBUNIT PROTEIN BS16M"/>
    <property type="match status" value="1"/>
</dbReference>
<dbReference type="Pfam" id="PF00886">
    <property type="entry name" value="Ribosomal_S16"/>
    <property type="match status" value="1"/>
</dbReference>
<dbReference type="SUPFAM" id="SSF54565">
    <property type="entry name" value="Ribosomal protein S16"/>
    <property type="match status" value="1"/>
</dbReference>
<feature type="chain" id="PRO_0000243779" description="Small ribosomal subunit protein bS16">
    <location>
        <begin position="1"/>
        <end position="117"/>
    </location>
</feature>
<feature type="region of interest" description="Disordered" evidence="2">
    <location>
        <begin position="81"/>
        <end position="117"/>
    </location>
</feature>
<feature type="compositionally biased region" description="Basic residues" evidence="2">
    <location>
        <begin position="81"/>
        <end position="90"/>
    </location>
</feature>
<evidence type="ECO:0000255" key="1">
    <source>
        <dbReference type="HAMAP-Rule" id="MF_00385"/>
    </source>
</evidence>
<evidence type="ECO:0000256" key="2">
    <source>
        <dbReference type="SAM" id="MobiDB-lite"/>
    </source>
</evidence>
<evidence type="ECO:0000305" key="3"/>
<reference key="1">
    <citation type="journal article" date="2004" name="Proc. Natl. Acad. Sci. U.S.A.">
        <title>The louse-borne human pathogen Bartonella quintana is a genomic derivative of the zoonotic agent Bartonella henselae.</title>
        <authorList>
            <person name="Alsmark U.C.M."/>
            <person name="Frank A.C."/>
            <person name="Karlberg E.O."/>
            <person name="Legault B.-A."/>
            <person name="Ardell D.H."/>
            <person name="Canbaeck B."/>
            <person name="Eriksson A.-S."/>
            <person name="Naeslund A.K."/>
            <person name="Handley S.A."/>
            <person name="Huvet M."/>
            <person name="La Scola B."/>
            <person name="Holmberg M."/>
            <person name="Andersson S.G.E."/>
        </authorList>
    </citation>
    <scope>NUCLEOTIDE SEQUENCE [LARGE SCALE GENOMIC DNA]</scope>
    <source>
        <strain>Toulouse</strain>
    </source>
</reference>
<name>RS16_BARQU</name>
<keyword id="KW-0687">Ribonucleoprotein</keyword>
<keyword id="KW-0689">Ribosomal protein</keyword>
<accession>Q6FYF9</accession>
<comment type="similarity">
    <text evidence="1">Belongs to the bacterial ribosomal protein bS16 family.</text>
</comment>
<gene>
    <name evidence="1" type="primary">rpsP</name>
    <name type="ordered locus">BQ12920</name>
</gene>
<protein>
    <recommendedName>
        <fullName evidence="1">Small ribosomal subunit protein bS16</fullName>
    </recommendedName>
    <alternativeName>
        <fullName evidence="3">30S ribosomal protein S16</fullName>
    </alternativeName>
</protein>
<sequence>MALKIRLSRGGSKKRPYYHIVVADARSPRDGRFLERVGAWDPMLPKDGPRVKLNEERIQYWLGQGAQPTDRVLRFLDAVGLKKRPNRNNPHKGQPGKKAQERISAAKQVAEAESAPV</sequence>
<organism>
    <name type="scientific">Bartonella quintana (strain Toulouse)</name>
    <name type="common">Rochalimaea quintana</name>
    <dbReference type="NCBI Taxonomy" id="283165"/>
    <lineage>
        <taxon>Bacteria</taxon>
        <taxon>Pseudomonadati</taxon>
        <taxon>Pseudomonadota</taxon>
        <taxon>Alphaproteobacteria</taxon>
        <taxon>Hyphomicrobiales</taxon>
        <taxon>Bartonellaceae</taxon>
        <taxon>Bartonella</taxon>
    </lineage>
</organism>